<sequence length="655" mass="73025">MKRNRFFNTSAAIAISIALNTFFCSMQTIAAEPEETYLDFRKETIYFLFLDRFSDGDPSNNAGFNSATYDPNNLKKYTGGDLRGLINKLPYLKSLGVTSIWITPPIDNVNNTDAAGNTGYHGYWGRDYFRIDEHFGNLDDFKELTSLMHSPDYNMKLVLDYAPNHSNANDENEFGALYRDGVFITDYPTNVAANTGWYHHNGGVTNWNDFFQVKNHNLFNLSDLNQSNTDVYQYLLDGSKFWIDAGVDAIRIDAIKHMDKSFIQKWTSDIYDYSKSIGREGFFFFGEWFGASANTTTGVDGNAIDYANTSGSALLDFGFRDTLERVLVGRSGNTMKTLNSYLIKRQTVFTSDDWQVVFMDNHDMARIGTALRSNATTFGPGNNETGGSQSEAFAQKRIDLGLVATMTVRGIPAIYYGTEHYAANFTSNSFGQVGSDPYNREKMPGFDTESEAFSIIKTLGDLRKSSPAIQNGTYTELWVNDDILVFERRSGNDIVIVALNRGEANTINVKNIAVPNGVYPSLIGNNSVSVANKRTTLTLMQNEAVVIRSQSDDAENPTVQSINFTCNNGYTISGQSVYIIGNIPQLGGWDLTKAVKISPTQYPQWSASLELPSDLNVEWKCVKRNETNPTANVEWQSGANNQFNSNDTQTTNGSF</sequence>
<feature type="signal peptide">
    <location>
        <begin position="1"/>
        <end position="30"/>
    </location>
</feature>
<feature type="chain" id="PRO_0000001443" description="Cyclomaltodextrin glucanotransferase">
    <location>
        <begin position="31"/>
        <end position="655"/>
    </location>
</feature>
<feature type="domain" description="CBM20" evidence="2">
    <location>
        <begin position="554"/>
        <end position="655"/>
    </location>
</feature>
<feature type="region of interest" description="Disordered" evidence="3">
    <location>
        <begin position="630"/>
        <end position="655"/>
    </location>
</feature>
<feature type="active site" description="Nucleophile" evidence="1">
    <location>
        <position position="253"/>
    </location>
</feature>
<feature type="active site" description="Proton donor" evidence="1">
    <location>
        <position position="287"/>
    </location>
</feature>
<feature type="binding site" evidence="1">
    <location>
        <position position="55"/>
    </location>
    <ligand>
        <name>Ca(2+)</name>
        <dbReference type="ChEBI" id="CHEBI:29108"/>
        <label>1</label>
    </ligand>
</feature>
<feature type="binding site" evidence="1">
    <location>
        <position position="60"/>
    </location>
    <ligand>
        <name>Ca(2+)</name>
        <dbReference type="ChEBI" id="CHEBI:29108"/>
        <label>1</label>
    </ligand>
</feature>
<feature type="binding site" evidence="1">
    <location>
        <position position="61"/>
    </location>
    <ligand>
        <name>Ca(2+)</name>
        <dbReference type="ChEBI" id="CHEBI:29108"/>
        <label>1</label>
    </ligand>
</feature>
<feature type="binding site" evidence="1">
    <location>
        <position position="79"/>
    </location>
    <ligand>
        <name>Ca(2+)</name>
        <dbReference type="ChEBI" id="CHEBI:29108"/>
        <label>1</label>
    </ligand>
</feature>
<feature type="binding site" evidence="1">
    <location>
        <position position="81"/>
    </location>
    <ligand>
        <name>Ca(2+)</name>
        <dbReference type="ChEBI" id="CHEBI:29108"/>
        <label>1</label>
    </ligand>
</feature>
<feature type="binding site" evidence="1">
    <location>
        <begin position="123"/>
        <end position="124"/>
    </location>
    <ligand>
        <name>substrate</name>
    </ligand>
</feature>
<feature type="binding site" evidence="1">
    <location>
        <position position="164"/>
    </location>
    <ligand>
        <name>Ca(2+)</name>
        <dbReference type="ChEBI" id="CHEBI:29108"/>
        <label>2</label>
    </ligand>
</feature>
<feature type="binding site" evidence="1">
    <location>
        <position position="165"/>
    </location>
    <ligand>
        <name>substrate</name>
    </ligand>
</feature>
<feature type="binding site" evidence="1">
    <location>
        <begin position="217"/>
        <end position="220"/>
    </location>
    <ligand>
        <name>substrate</name>
    </ligand>
</feature>
<feature type="binding site" evidence="1">
    <location>
        <position position="223"/>
    </location>
    <ligand>
        <name>Ca(2+)</name>
        <dbReference type="ChEBI" id="CHEBI:29108"/>
        <label>2</label>
    </ligand>
</feature>
<feature type="binding site" evidence="1">
    <location>
        <position position="251"/>
    </location>
    <ligand>
        <name>substrate</name>
    </ligand>
</feature>
<feature type="binding site" evidence="1">
    <location>
        <begin position="256"/>
        <end position="257"/>
    </location>
    <ligand>
        <name>substrate</name>
    </ligand>
</feature>
<feature type="binding site" evidence="1">
    <location>
        <position position="257"/>
    </location>
    <ligand>
        <name>Ca(2+)</name>
        <dbReference type="ChEBI" id="CHEBI:29108"/>
        <label>2</label>
    </ligand>
</feature>
<feature type="binding site" evidence="1">
    <location>
        <position position="362"/>
    </location>
    <ligand>
        <name>substrate</name>
    </ligand>
</feature>
<feature type="binding site" evidence="1">
    <location>
        <position position="436"/>
    </location>
    <ligand>
        <name>substrate</name>
    </ligand>
</feature>
<feature type="binding site" evidence="1">
    <location>
        <position position="440"/>
    </location>
    <ligand>
        <name>substrate</name>
    </ligand>
</feature>
<feature type="site" description="Transition state stabilizer" evidence="1">
    <location>
        <position position="363"/>
    </location>
</feature>
<accession>P08704</accession>
<name>CDGT_KLEOX</name>
<dbReference type="EC" id="2.4.1.19"/>
<dbReference type="EMBL" id="M15264">
    <property type="protein sequence ID" value="AAA25059.1"/>
    <property type="molecule type" value="Genomic_DNA"/>
</dbReference>
<dbReference type="PIR" id="A29023">
    <property type="entry name" value="ALKBG"/>
</dbReference>
<dbReference type="SMR" id="P08704"/>
<dbReference type="CAZy" id="CBM20">
    <property type="family name" value="Carbohydrate-Binding Module Family 20"/>
</dbReference>
<dbReference type="CAZy" id="GH13">
    <property type="family name" value="Glycoside Hydrolase Family 13"/>
</dbReference>
<dbReference type="KEGG" id="ag:AAA25059"/>
<dbReference type="BRENDA" id="2.4.1.19">
    <property type="organism ID" value="2811"/>
</dbReference>
<dbReference type="GO" id="GO:0043895">
    <property type="term" value="F:cyclomaltodextrin glucanotransferase activity"/>
    <property type="evidence" value="ECO:0007669"/>
    <property type="project" value="UniProtKB-EC"/>
</dbReference>
<dbReference type="GO" id="GO:0046872">
    <property type="term" value="F:metal ion binding"/>
    <property type="evidence" value="ECO:0007669"/>
    <property type="project" value="UniProtKB-KW"/>
</dbReference>
<dbReference type="GO" id="GO:2001070">
    <property type="term" value="F:starch binding"/>
    <property type="evidence" value="ECO:0007669"/>
    <property type="project" value="InterPro"/>
</dbReference>
<dbReference type="GO" id="GO:0005975">
    <property type="term" value="P:carbohydrate metabolic process"/>
    <property type="evidence" value="ECO:0007669"/>
    <property type="project" value="InterPro"/>
</dbReference>
<dbReference type="CDD" id="cd11320">
    <property type="entry name" value="AmyAc_AmyMalt_CGTase_like"/>
    <property type="match status" value="1"/>
</dbReference>
<dbReference type="CDD" id="cd05810">
    <property type="entry name" value="CBM20_alpha_MTH"/>
    <property type="match status" value="1"/>
</dbReference>
<dbReference type="Gene3D" id="3.20.20.80">
    <property type="entry name" value="Glycosidases"/>
    <property type="match status" value="1"/>
</dbReference>
<dbReference type="Gene3D" id="2.60.40.1180">
    <property type="entry name" value="Golgi alpha-mannosidase II"/>
    <property type="match status" value="1"/>
</dbReference>
<dbReference type="Gene3D" id="2.60.40.10">
    <property type="entry name" value="Immunoglobulins"/>
    <property type="match status" value="1"/>
</dbReference>
<dbReference type="InterPro" id="IPR006048">
    <property type="entry name" value="A-amylase/branching_C"/>
</dbReference>
<dbReference type="InterPro" id="IPR031319">
    <property type="entry name" value="A-amylase_C"/>
</dbReference>
<dbReference type="InterPro" id="IPR013784">
    <property type="entry name" value="Carb-bd-like_fold"/>
</dbReference>
<dbReference type="InterPro" id="IPR002044">
    <property type="entry name" value="CBM20"/>
</dbReference>
<dbReference type="InterPro" id="IPR006047">
    <property type="entry name" value="Glyco_hydro_13_cat_dom"/>
</dbReference>
<dbReference type="InterPro" id="IPR013780">
    <property type="entry name" value="Glyco_hydro_b"/>
</dbReference>
<dbReference type="InterPro" id="IPR017853">
    <property type="entry name" value="Glycoside_hydrolase_SF"/>
</dbReference>
<dbReference type="InterPro" id="IPR013783">
    <property type="entry name" value="Ig-like_fold"/>
</dbReference>
<dbReference type="PANTHER" id="PTHR10357:SF215">
    <property type="entry name" value="ALPHA-AMYLASE 1"/>
    <property type="match status" value="1"/>
</dbReference>
<dbReference type="PANTHER" id="PTHR10357">
    <property type="entry name" value="ALPHA-AMYLASE FAMILY MEMBER"/>
    <property type="match status" value="1"/>
</dbReference>
<dbReference type="Pfam" id="PF00128">
    <property type="entry name" value="Alpha-amylase"/>
    <property type="match status" value="1"/>
</dbReference>
<dbReference type="Pfam" id="PF02806">
    <property type="entry name" value="Alpha-amylase_C"/>
    <property type="match status" value="1"/>
</dbReference>
<dbReference type="Pfam" id="PF00686">
    <property type="entry name" value="CBM_20"/>
    <property type="match status" value="1"/>
</dbReference>
<dbReference type="SMART" id="SM00642">
    <property type="entry name" value="Aamy"/>
    <property type="match status" value="1"/>
</dbReference>
<dbReference type="SMART" id="SM00632">
    <property type="entry name" value="Aamy_C"/>
    <property type="match status" value="1"/>
</dbReference>
<dbReference type="SMART" id="SM01065">
    <property type="entry name" value="CBM_2"/>
    <property type="match status" value="1"/>
</dbReference>
<dbReference type="SUPFAM" id="SSF51445">
    <property type="entry name" value="(Trans)glycosidases"/>
    <property type="match status" value="1"/>
</dbReference>
<dbReference type="SUPFAM" id="SSF51011">
    <property type="entry name" value="Glycosyl hydrolase domain"/>
    <property type="match status" value="1"/>
</dbReference>
<dbReference type="SUPFAM" id="SSF49452">
    <property type="entry name" value="Starch-binding domain-like"/>
    <property type="match status" value="1"/>
</dbReference>
<dbReference type="PROSITE" id="PS51166">
    <property type="entry name" value="CBM20"/>
    <property type="match status" value="1"/>
</dbReference>
<evidence type="ECO:0000250" key="1"/>
<evidence type="ECO:0000255" key="2">
    <source>
        <dbReference type="PROSITE-ProRule" id="PRU00594"/>
    </source>
</evidence>
<evidence type="ECO:0000256" key="3">
    <source>
        <dbReference type="SAM" id="MobiDB-lite"/>
    </source>
</evidence>
<evidence type="ECO:0000305" key="4"/>
<reference key="1">
    <citation type="journal article" date="1986" name="Gene">
        <title>Cyclodextrin-glycosyltransferase from Klebsiella pneumoniae M5a1: cloning, nucleotide sequence and expression.</title>
        <authorList>
            <person name="Binder F."/>
            <person name="Huber O."/>
            <person name="Boeck A."/>
        </authorList>
    </citation>
    <scope>NUCLEOTIDE SEQUENCE [GENOMIC DNA]</scope>
    <source>
        <strain>M5a1</strain>
    </source>
</reference>
<comment type="catalytic activity">
    <reaction>
        <text>Cyclizes part of a (1-&gt;4)-alpha-D-glucan chain by formation of a (1-&gt;4)-alpha-D-glucosidic bond.</text>
        <dbReference type="EC" id="2.4.1.19"/>
    </reaction>
</comment>
<comment type="cofactor">
    <cofactor evidence="1">
        <name>Ca(2+)</name>
        <dbReference type="ChEBI" id="CHEBI:29108"/>
    </cofactor>
    <text evidence="1">Binds 2 calcium ions per subunit.</text>
</comment>
<comment type="subunit">
    <text>Monomer.</text>
</comment>
<comment type="domain">
    <text>May consist of two protein domains: the one in the N-terminal side cleaves the alpha-1,4-glucosidic bond in starch, and the other in the C-terminal side catalyzes other activities, including the reconstitution of an alpha-1,4-glucosidic linkage for cyclizing the maltooligosaccharide produced.</text>
</comment>
<comment type="similarity">
    <text evidence="4">Belongs to the glycosyl hydrolase 13 family.</text>
</comment>
<protein>
    <recommendedName>
        <fullName>Cyclomaltodextrin glucanotransferase</fullName>
        <ecNumber>2.4.1.19</ecNumber>
    </recommendedName>
    <alternativeName>
        <fullName>Cyclodextrin-glycosyltransferase</fullName>
        <shortName>CGTase</shortName>
    </alternativeName>
</protein>
<keyword id="KW-0106">Calcium</keyword>
<keyword id="KW-0328">Glycosyltransferase</keyword>
<keyword id="KW-0479">Metal-binding</keyword>
<keyword id="KW-0732">Signal</keyword>
<keyword id="KW-0808">Transferase</keyword>
<gene>
    <name type="primary">cgt</name>
</gene>
<organism>
    <name type="scientific">Klebsiella oxytoca</name>
    <dbReference type="NCBI Taxonomy" id="571"/>
    <lineage>
        <taxon>Bacteria</taxon>
        <taxon>Pseudomonadati</taxon>
        <taxon>Pseudomonadota</taxon>
        <taxon>Gammaproteobacteria</taxon>
        <taxon>Enterobacterales</taxon>
        <taxon>Enterobacteriaceae</taxon>
        <taxon>Klebsiella/Raoultella group</taxon>
        <taxon>Klebsiella</taxon>
    </lineage>
</organism>
<proteinExistence type="inferred from homology"/>